<feature type="chain" id="PRO_0000213722" description="Protein-glutamine gamma-glutamyltransferase">
    <location>
        <begin position="1"/>
        <end position="276"/>
    </location>
</feature>
<accession>Q81MS1</accession>
<accession>Q6HU63</accession>
<accession>Q6KNE8</accession>
<sequence>MIVIGRSIVHPYITNEYEPFAAEKQQILSIMAGNQEIYSFRTSDELSFDLNLRVNIITSALELFQSGFQFRTFQQSFCNPQYWKRTSLGGFELLPNIPPSIAIQDIFKNGKLYGTECATAMIIIFYKALLSLYEKETFNRLFANLLLYTWDYDQDLKLITKTGGDLVPGDLVYFKNPQVNPATIEWQGENTIYLGNFFFYGHGVGVKTKEEIIYALNERRVPYAFISAFLTDTITRIDSRLMSYHASPSTPQTSIGFIPIRDDAIVATVGNTTTVY</sequence>
<comment type="function">
    <text evidence="1">Probably plays a role in the assembly of the spore coat proteins by catalyzing epsilon-(gamma-glutamyl)lysine cross-links.</text>
</comment>
<comment type="catalytic activity">
    <reaction evidence="1">
        <text>L-glutaminyl-[protein] + L-lysyl-[protein] = [protein]-L-lysyl-N(6)-5-L-glutamyl-[protein] + NH4(+)</text>
        <dbReference type="Rhea" id="RHEA:54816"/>
        <dbReference type="Rhea" id="RHEA-COMP:9752"/>
        <dbReference type="Rhea" id="RHEA-COMP:10207"/>
        <dbReference type="Rhea" id="RHEA-COMP:14005"/>
        <dbReference type="ChEBI" id="CHEBI:28938"/>
        <dbReference type="ChEBI" id="CHEBI:29969"/>
        <dbReference type="ChEBI" id="CHEBI:30011"/>
        <dbReference type="ChEBI" id="CHEBI:138370"/>
        <dbReference type="EC" id="2.3.2.13"/>
    </reaction>
</comment>
<comment type="similarity">
    <text evidence="1">Belongs to the bacillus TGase family.</text>
</comment>
<reference key="1">
    <citation type="journal article" date="2003" name="Nature">
        <title>The genome sequence of Bacillus anthracis Ames and comparison to closely related bacteria.</title>
        <authorList>
            <person name="Read T.D."/>
            <person name="Peterson S.N."/>
            <person name="Tourasse N.J."/>
            <person name="Baillie L.W."/>
            <person name="Paulsen I.T."/>
            <person name="Nelson K.E."/>
            <person name="Tettelin H."/>
            <person name="Fouts D.E."/>
            <person name="Eisen J.A."/>
            <person name="Gill S.R."/>
            <person name="Holtzapple E.K."/>
            <person name="Okstad O.A."/>
            <person name="Helgason E."/>
            <person name="Rilstone J."/>
            <person name="Wu M."/>
            <person name="Kolonay J.F."/>
            <person name="Beanan M.J."/>
            <person name="Dodson R.J."/>
            <person name="Brinkac L.M."/>
            <person name="Gwinn M.L."/>
            <person name="DeBoy R.T."/>
            <person name="Madpu R."/>
            <person name="Daugherty S.C."/>
            <person name="Durkin A.S."/>
            <person name="Haft D.H."/>
            <person name="Nelson W.C."/>
            <person name="Peterson J.D."/>
            <person name="Pop M."/>
            <person name="Khouri H.M."/>
            <person name="Radune D."/>
            <person name="Benton J.L."/>
            <person name="Mahamoud Y."/>
            <person name="Jiang L."/>
            <person name="Hance I.R."/>
            <person name="Weidman J.F."/>
            <person name="Berry K.J."/>
            <person name="Plaut R.D."/>
            <person name="Wolf A.M."/>
            <person name="Watkins K.L."/>
            <person name="Nierman W.C."/>
            <person name="Hazen A."/>
            <person name="Cline R.T."/>
            <person name="Redmond C."/>
            <person name="Thwaite J.E."/>
            <person name="White O."/>
            <person name="Salzberg S.L."/>
            <person name="Thomason B."/>
            <person name="Friedlander A.M."/>
            <person name="Koehler T.M."/>
            <person name="Hanna P.C."/>
            <person name="Kolstoe A.-B."/>
            <person name="Fraser C.M."/>
        </authorList>
    </citation>
    <scope>NUCLEOTIDE SEQUENCE [LARGE SCALE GENOMIC DNA]</scope>
    <source>
        <strain>Ames / isolate Porton</strain>
    </source>
</reference>
<reference key="2">
    <citation type="journal article" date="2009" name="J. Bacteriol.">
        <title>The complete genome sequence of Bacillus anthracis Ames 'Ancestor'.</title>
        <authorList>
            <person name="Ravel J."/>
            <person name="Jiang L."/>
            <person name="Stanley S.T."/>
            <person name="Wilson M.R."/>
            <person name="Decker R.S."/>
            <person name="Read T.D."/>
            <person name="Worsham P."/>
            <person name="Keim P.S."/>
            <person name="Salzberg S.L."/>
            <person name="Fraser-Liggett C.M."/>
            <person name="Rasko D.A."/>
        </authorList>
    </citation>
    <scope>NUCLEOTIDE SEQUENCE [LARGE SCALE GENOMIC DNA]</scope>
    <source>
        <strain>Ames ancestor</strain>
    </source>
</reference>
<reference key="3">
    <citation type="submission" date="2004-01" db="EMBL/GenBank/DDBJ databases">
        <title>Complete genome sequence of Bacillus anthracis Sterne.</title>
        <authorList>
            <person name="Brettin T.S."/>
            <person name="Bruce D."/>
            <person name="Challacombe J.F."/>
            <person name="Gilna P."/>
            <person name="Han C."/>
            <person name="Hill K."/>
            <person name="Hitchcock P."/>
            <person name="Jackson P."/>
            <person name="Keim P."/>
            <person name="Longmire J."/>
            <person name="Lucas S."/>
            <person name="Okinaka R."/>
            <person name="Richardson P."/>
            <person name="Rubin E."/>
            <person name="Tice H."/>
        </authorList>
    </citation>
    <scope>NUCLEOTIDE SEQUENCE [LARGE SCALE GENOMIC DNA]</scope>
    <source>
        <strain>Sterne</strain>
    </source>
</reference>
<dbReference type="EC" id="2.3.2.13" evidence="1"/>
<dbReference type="EMBL" id="AE016879">
    <property type="protein sequence ID" value="AAP27897.1"/>
    <property type="molecule type" value="Genomic_DNA"/>
</dbReference>
<dbReference type="EMBL" id="AE017334">
    <property type="protein sequence ID" value="AAT33295.1"/>
    <property type="molecule type" value="Genomic_DNA"/>
</dbReference>
<dbReference type="EMBL" id="AE017225">
    <property type="protein sequence ID" value="AAT56176.1"/>
    <property type="molecule type" value="Genomic_DNA"/>
</dbReference>
<dbReference type="RefSeq" id="NP_846411.1">
    <property type="nucleotide sequence ID" value="NC_003997.3"/>
</dbReference>
<dbReference type="RefSeq" id="WP_000635329.1">
    <property type="nucleotide sequence ID" value="NZ_WXXJ01000027.1"/>
</dbReference>
<dbReference type="RefSeq" id="YP_030125.1">
    <property type="nucleotide sequence ID" value="NC_005945.1"/>
</dbReference>
<dbReference type="SMR" id="Q81MS1"/>
<dbReference type="STRING" id="261594.GBAA_4173"/>
<dbReference type="DNASU" id="1088859"/>
<dbReference type="GeneID" id="45023850"/>
<dbReference type="KEGG" id="ban:BA_4173"/>
<dbReference type="KEGG" id="banh:HYU01_20415"/>
<dbReference type="KEGG" id="bar:GBAA_4173"/>
<dbReference type="KEGG" id="bat:BAS3875"/>
<dbReference type="PATRIC" id="fig|198094.11.peg.4144"/>
<dbReference type="eggNOG" id="ENOG502Z8C5">
    <property type="taxonomic scope" value="Bacteria"/>
</dbReference>
<dbReference type="HOGENOM" id="CLU_088922_0_0_9"/>
<dbReference type="OMA" id="FYAFECA"/>
<dbReference type="OrthoDB" id="1845399at2"/>
<dbReference type="Proteomes" id="UP000000427">
    <property type="component" value="Chromosome"/>
</dbReference>
<dbReference type="Proteomes" id="UP000000594">
    <property type="component" value="Chromosome"/>
</dbReference>
<dbReference type="GO" id="GO:0003810">
    <property type="term" value="F:protein-glutamine gamma-glutamyltransferase activity"/>
    <property type="evidence" value="ECO:0007669"/>
    <property type="project" value="UniProtKB-UniRule"/>
</dbReference>
<dbReference type="GO" id="GO:0030435">
    <property type="term" value="P:sporulation resulting in formation of a cellular spore"/>
    <property type="evidence" value="ECO:0007669"/>
    <property type="project" value="UniProtKB-UniRule"/>
</dbReference>
<dbReference type="HAMAP" id="MF_00727">
    <property type="entry name" value="Tgl"/>
    <property type="match status" value="1"/>
</dbReference>
<dbReference type="InterPro" id="IPR020916">
    <property type="entry name" value="Gln_gamma-glutamylTfrase_bac"/>
</dbReference>
<dbReference type="NCBIfam" id="NF002869">
    <property type="entry name" value="PRK03187.1"/>
    <property type="match status" value="1"/>
</dbReference>
<dbReference type="Pfam" id="PF20085">
    <property type="entry name" value="TGL"/>
    <property type="match status" value="1"/>
</dbReference>
<proteinExistence type="inferred from homology"/>
<gene>
    <name evidence="1" type="primary">tgl</name>
    <name type="ordered locus">BA_4173</name>
    <name type="ordered locus">GBAA_4173</name>
    <name type="ordered locus">BAS3875</name>
</gene>
<keyword id="KW-0012">Acyltransferase</keyword>
<keyword id="KW-1185">Reference proteome</keyword>
<keyword id="KW-0749">Sporulation</keyword>
<keyword id="KW-0808">Transferase</keyword>
<protein>
    <recommendedName>
        <fullName evidence="1">Protein-glutamine gamma-glutamyltransferase</fullName>
        <ecNumber evidence="1">2.3.2.13</ecNumber>
    </recommendedName>
    <alternativeName>
        <fullName evidence="1">Transglutaminase</fullName>
        <shortName evidence="1">TGase</shortName>
    </alternativeName>
</protein>
<evidence type="ECO:0000255" key="1">
    <source>
        <dbReference type="HAMAP-Rule" id="MF_00727"/>
    </source>
</evidence>
<name>TGL_BACAN</name>
<organism>
    <name type="scientific">Bacillus anthracis</name>
    <dbReference type="NCBI Taxonomy" id="1392"/>
    <lineage>
        <taxon>Bacteria</taxon>
        <taxon>Bacillati</taxon>
        <taxon>Bacillota</taxon>
        <taxon>Bacilli</taxon>
        <taxon>Bacillales</taxon>
        <taxon>Bacillaceae</taxon>
        <taxon>Bacillus</taxon>
        <taxon>Bacillus cereus group</taxon>
    </lineage>
</organism>